<accession>P04289</accession>
<accession>B9VQD8</accession>
<accession>Q09IC2</accession>
<dbReference type="EMBL" id="X14112">
    <property type="protein sequence ID" value="CAA32347.1"/>
    <property type="molecule type" value="Genomic_DNA"/>
</dbReference>
<dbReference type="EMBL" id="X03839">
    <property type="protein sequence ID" value="CAA27452.1"/>
    <property type="molecule type" value="Genomic_DNA"/>
</dbReference>
<dbReference type="EMBL" id="DQ889502">
    <property type="protein sequence ID" value="ABI63473.1"/>
    <property type="molecule type" value="Genomic_DNA"/>
</dbReference>
<dbReference type="EMBL" id="FJ593289">
    <property type="protein sequence ID" value="ACM62233.1"/>
    <property type="molecule type" value="Genomic_DNA"/>
</dbReference>
<dbReference type="PIR" id="A03737">
    <property type="entry name" value="WMBE11"/>
</dbReference>
<dbReference type="RefSeq" id="YP_009137085.1">
    <property type="nucleotide sequence ID" value="NC_001806.2"/>
</dbReference>
<dbReference type="SASBDB" id="P04289"/>
<dbReference type="IntAct" id="P04289">
    <property type="interactions" value="1"/>
</dbReference>
<dbReference type="MINT" id="P04289"/>
<dbReference type="iPTMnet" id="P04289"/>
<dbReference type="GeneID" id="24271464"/>
<dbReference type="KEGG" id="vg:24271464"/>
<dbReference type="Proteomes" id="UP000009294">
    <property type="component" value="Segment"/>
</dbReference>
<dbReference type="Proteomes" id="UP000180652">
    <property type="component" value="Segment"/>
</dbReference>
<dbReference type="GO" id="GO:0044178">
    <property type="term" value="C:host cell Golgi membrane"/>
    <property type="evidence" value="ECO:0007669"/>
    <property type="project" value="UniProtKB-SubCell"/>
</dbReference>
<dbReference type="GO" id="GO:0020002">
    <property type="term" value="C:host cell plasma membrane"/>
    <property type="evidence" value="ECO:0007669"/>
    <property type="project" value="UniProtKB-SubCell"/>
</dbReference>
<dbReference type="GO" id="GO:0016020">
    <property type="term" value="C:membrane"/>
    <property type="evidence" value="ECO:0007669"/>
    <property type="project" value="UniProtKB-KW"/>
</dbReference>
<dbReference type="GO" id="GO:0019033">
    <property type="term" value="C:viral tegument"/>
    <property type="evidence" value="ECO:0007669"/>
    <property type="project" value="UniProtKB-SubCell"/>
</dbReference>
<dbReference type="GO" id="GO:0055036">
    <property type="term" value="C:virion membrane"/>
    <property type="evidence" value="ECO:0007669"/>
    <property type="project" value="UniProtKB-SubCell"/>
</dbReference>
<dbReference type="GO" id="GO:0009653">
    <property type="term" value="P:anatomical structure morphogenesis"/>
    <property type="evidence" value="ECO:0007669"/>
    <property type="project" value="UniProtKB-UniRule"/>
</dbReference>
<dbReference type="GO" id="GO:0046760">
    <property type="term" value="P:viral budding from Golgi membrane"/>
    <property type="evidence" value="ECO:0000314"/>
    <property type="project" value="UniProtKB"/>
</dbReference>
<dbReference type="HAMAP" id="MF_04040">
    <property type="entry name" value="HSV_CEP3_alphahv"/>
    <property type="match status" value="1"/>
</dbReference>
<dbReference type="InterPro" id="IPR024351">
    <property type="entry name" value="Tegument_UL11_Herpesvir"/>
</dbReference>
<dbReference type="InterPro" id="IPR016395">
    <property type="entry name" value="UL11_simplexvirus"/>
</dbReference>
<dbReference type="Pfam" id="PF11094">
    <property type="entry name" value="UL11"/>
    <property type="match status" value="1"/>
</dbReference>
<dbReference type="PIRSF" id="PIRSF003496">
    <property type="entry name" value="Myristoylat_tegument_UL11"/>
    <property type="match status" value="1"/>
</dbReference>
<keyword id="KW-1032">Host cell membrane</keyword>
<keyword id="KW-1040">Host Golgi apparatus</keyword>
<keyword id="KW-1043">Host membrane</keyword>
<keyword id="KW-0449">Lipoprotein</keyword>
<keyword id="KW-0472">Membrane</keyword>
<keyword id="KW-0519">Myristate</keyword>
<keyword id="KW-0564">Palmitate</keyword>
<keyword id="KW-0597">Phosphoprotein</keyword>
<keyword id="KW-1185">Reference proteome</keyword>
<keyword id="KW-0946">Virion</keyword>
<keyword id="KW-0920">Virion tegument</keyword>
<evidence type="ECO:0000250" key="1">
    <source>
        <dbReference type="UniProtKB" id="P13294"/>
    </source>
</evidence>
<evidence type="ECO:0000255" key="2">
    <source>
        <dbReference type="HAMAP-Rule" id="MF_04040"/>
    </source>
</evidence>
<evidence type="ECO:0000256" key="3">
    <source>
        <dbReference type="SAM" id="MobiDB-lite"/>
    </source>
</evidence>
<evidence type="ECO:0000269" key="4">
    <source>
    </source>
</evidence>
<evidence type="ECO:0000269" key="5">
    <source>
    </source>
</evidence>
<evidence type="ECO:0000269" key="6">
    <source>
    </source>
</evidence>
<evidence type="ECO:0000269" key="7">
    <source>
    </source>
</evidence>
<evidence type="ECO:0000269" key="8">
    <source>
    </source>
</evidence>
<evidence type="ECO:0000269" key="9">
    <source>
    </source>
</evidence>
<evidence type="ECO:0000269" key="10">
    <source>
    </source>
</evidence>
<evidence type="ECO:0000269" key="11">
    <source>
    </source>
</evidence>
<evidence type="ECO:0000269" key="12">
    <source>
    </source>
</evidence>
<evidence type="ECO:0000269" key="13">
    <source>
    </source>
</evidence>
<reference key="1">
    <citation type="journal article" date="1986" name="Nucleic Acids Res.">
        <title>DNA sequence of the region in the genome of herpes simplex virus type 1 containing the exonuclease gene and neighbouring genes.</title>
        <authorList>
            <person name="McGeoch D.J."/>
            <person name="Dolan A."/>
            <person name="Frame M.C."/>
        </authorList>
    </citation>
    <scope>NUCLEOTIDE SEQUENCE [GENOMIC DNA]</scope>
</reference>
<reference key="2">
    <citation type="journal article" date="1988" name="J. Gen. Virol.">
        <title>The complete DNA sequence of the long unique region in the genome of herpes simplex virus type 1.</title>
        <authorList>
            <person name="McGeoch D.J."/>
            <person name="Dalrymple M.A."/>
            <person name="Davison A.J."/>
            <person name="Dolan A."/>
            <person name="Frame M.C."/>
            <person name="McNab D."/>
            <person name="Perry L.J."/>
            <person name="Scott J.E."/>
            <person name="Taylor P."/>
        </authorList>
    </citation>
    <scope>NUCLEOTIDE SEQUENCE [LARGE SCALE GENOMIC DNA]</scope>
</reference>
<reference key="3">
    <citation type="journal article" date="2007" name="Microbes Infect.">
        <title>Determination and analysis of the DNA sequence of highly attenuated herpes simplex virus type 1 mutant HF10, a potential oncolytic virus.</title>
        <authorList>
            <person name="Ushijima Y."/>
            <person name="Luo C."/>
            <person name="Goshima F."/>
            <person name="Yamauchi Y."/>
            <person name="Kimura H."/>
            <person name="Nishiyama Y."/>
        </authorList>
    </citation>
    <scope>NUCLEOTIDE SEQUENCE [LARGE SCALE GENOMIC DNA]</scope>
    <source>
        <strain>Nonneuroinvasive mutant HF10</strain>
    </source>
</reference>
<reference key="4">
    <citation type="submission" date="2008-12" db="EMBL/GenBank/DDBJ databases">
        <title>Herpes simplex virus type 1 bacterial artificial chromosome.</title>
        <authorList>
            <person name="Cunningham C."/>
            <person name="Davison A.J."/>
        </authorList>
    </citation>
    <scope>NUCLEOTIDE SEQUENCE [LARGE SCALE GENOMIC DNA]</scope>
    <source>
        <strain>17 syn+</strain>
    </source>
</reference>
<reference key="5">
    <citation type="journal article" date="1992" name="J. Gen. Virol.">
        <title>The myristylated virion proteins of herpes simplex virus type 1: investigation of their role in the virus life cycle.</title>
        <authorList>
            <person name="MacLean C.A."/>
            <person name="Dolan A."/>
            <person name="Jamieson F.E."/>
            <person name="McGeoch D.J."/>
        </authorList>
    </citation>
    <scope>MYRISTOYLATION AT GLY-2</scope>
    <scope>SUBCELLULAR LOCATION</scope>
</reference>
<reference key="6">
    <citation type="journal article" date="1992" name="J. Virol.">
        <title>The UL11 gene of herpes simplex virus 1 encodes a function that facilitates nucleocapsid envelopment and egress from cells.</title>
        <authorList>
            <person name="Baines J.D."/>
            <person name="Roizman B."/>
        </authorList>
    </citation>
    <scope>FUNCTION</scope>
</reference>
<reference key="7">
    <citation type="journal article" date="2000" name="J. Virol.">
        <title>Membrane targeting properties of a herpesvirus tegument protein-retrovirus Gag chimera.</title>
        <authorList>
            <person name="Bowzard J.B."/>
            <person name="Visalli R.J."/>
            <person name="Wilson C.B."/>
            <person name="Loomis J.S."/>
            <person name="Callahan E.M."/>
            <person name="Courtney R.J."/>
            <person name="Wills J.W."/>
        </authorList>
    </citation>
    <scope>SUBCELLULAR LOCATION</scope>
</reference>
<reference key="8">
    <citation type="journal article" date="2001" name="J. Virol.">
        <title>Intracellular trafficking of the UL11 tegument protein of herpes simplex virus type 1.</title>
        <authorList>
            <person name="Loomis J.S."/>
            <person name="Bowzard J.B."/>
            <person name="Courtney R.J."/>
            <person name="Wills J.W."/>
        </authorList>
    </citation>
    <scope>SUBCELLULAR LOCATION</scope>
    <scope>PHOSPHORYLATION AT SER-40</scope>
    <scope>DI-LEUCINE-LIKE INTERNALIZATION MOTIF</scope>
    <scope>ACIDIC REGION</scope>
</reference>
<reference key="9">
    <citation type="journal article" date="2006" name="J. Virol.">
        <title>Packaging determinants in the UL11 tegument protein of herpes simplex virus type 1.</title>
        <authorList>
            <person name="Loomis J.S."/>
            <person name="Courtney R.J."/>
            <person name="Wills J.W."/>
        </authorList>
    </citation>
    <scope>FUNCTION</scope>
    <scope>PHOSPHORYLATION</scope>
</reference>
<reference key="10">
    <citation type="journal article" date="2007" name="J. Virol.">
        <title>Cytoplasmic residues of herpes simplex virus glycoprotein gE required for secondary envelopment and binding of tegument proteins VP22 and UL11 to gE and gD.</title>
        <authorList>
            <person name="Farnsworth A."/>
            <person name="Wisner T.W."/>
            <person name="Johnson D.C."/>
        </authorList>
    </citation>
    <scope>INTERACTION WITH GLYCOPROTEIN D AND GLYCOPROTEIN E</scope>
    <source>
        <strain>F</strain>
    </source>
</reference>
<reference key="11">
    <citation type="journal article" date="2008" name="J. Virol.">
        <title>Comprehensive characterization of extracellular herpes simplex virus type 1 virions.</title>
        <authorList>
            <person name="Loret S."/>
            <person name="Guay G."/>
            <person name="Lippe R."/>
        </authorList>
    </citation>
    <scope>SUBCELLULAR LOCATION</scope>
    <source>
        <strain>F</strain>
    </source>
</reference>
<reference key="12">
    <citation type="journal article" date="2012" name="Proc. Natl. Acad. Sci. U.S.A.">
        <title>Function of glycoprotein E of herpes simplex virus requires coordinated assembly of three tegument proteins on its cytoplasmic tail.</title>
        <authorList>
            <person name="Han J."/>
            <person name="Chadha P."/>
            <person name="Starkey J.L."/>
            <person name="Wills J.W."/>
        </authorList>
    </citation>
    <scope>FUNCTION</scope>
</reference>
<reference key="13">
    <citation type="journal article" date="2012" name="J. Virol.">
        <title>Regulated interaction of tegument proteins UL16 and UL11 from herpes simplex virus.</title>
        <authorList>
            <person name="Chadha P."/>
            <person name="Han J."/>
            <person name="Starkey J.L."/>
            <person name="Wills J.W."/>
        </authorList>
    </citation>
    <scope>INTERACTION WITH UL16</scope>
</reference>
<reference key="14">
    <citation type="journal article" date="2013" name="J. Virol.">
        <title>Herpes simplex virus 1 glycoprotein M and the membrane-associated protein UL11 are required for virus-induced cell fusion and efficient virus entry.</title>
        <authorList>
            <person name="Kim I.J."/>
            <person name="Chouljenko V.N."/>
            <person name="Walker J.D."/>
            <person name="Kousoulas K.G."/>
        </authorList>
    </citation>
    <scope>FUNCTION</scope>
</reference>
<organismHost>
    <name type="scientific">Homo sapiens</name>
    <name type="common">Human</name>
    <dbReference type="NCBI Taxonomy" id="9606"/>
</organismHost>
<gene>
    <name type="ORF">UL11</name>
</gene>
<organism>
    <name type="scientific">Human herpesvirus 1 (strain 17)</name>
    <name type="common">HHV-1</name>
    <name type="synonym">Human herpes simplex virus 1</name>
    <dbReference type="NCBI Taxonomy" id="10299"/>
    <lineage>
        <taxon>Viruses</taxon>
        <taxon>Duplodnaviria</taxon>
        <taxon>Heunggongvirae</taxon>
        <taxon>Peploviricota</taxon>
        <taxon>Herviviricetes</taxon>
        <taxon>Herpesvirales</taxon>
        <taxon>Orthoherpesviridae</taxon>
        <taxon>Alphaherpesvirinae</taxon>
        <taxon>Simplexvirus</taxon>
        <taxon>Simplexvirus humanalpha1</taxon>
        <taxon>Human herpesvirus 1</taxon>
    </lineage>
</organism>
<name>CEP3_HHV11</name>
<sequence>MGLSFSGARPCCCRNNVLITDDGEVVSLTAHDFDVVDIESEEEGNFYVPPDMRGVTRAPGRQRLRSSDPPSRHTHRRTPGGACPATQFPPPMSDSE</sequence>
<protein>
    <recommendedName>
        <fullName evidence="2">Cytoplasmic envelopment protein 3</fullName>
    </recommendedName>
</protein>
<comment type="function">
    <text evidence="2 7 8 12 13">Plays an important role in the cytoplasmic envelopment of tegument proteins and capsids during the assembly and egress processes. Also participates in viral entry at the fusion step probably by regulating the core fusion machinery.</text>
</comment>
<comment type="subunit">
    <text evidence="1 2 9 11">Interacts with cytoplasmic envelopment protein 2; this interaction is essential for the proper localization of each protein to the assembly complex and thus for the production of infectious virus (By similarity). Interacts with gE (via C-terminus). Interacts with gD (via C-terminus). Interacts with UL56.</text>
</comment>
<comment type="interaction">
    <interactant intactId="EBI-7044930">
        <id>P04289</id>
    </interactant>
    <interactant intactId="EBI-7044955">
        <id>P10200</id>
        <label>UL16</label>
    </interactant>
    <organismsDiffer>false</organismsDiffer>
    <experiments>3</experiments>
</comment>
<comment type="subcellular location">
    <subcellularLocation>
        <location evidence="2 6 10">Virion tegument</location>
    </subcellularLocation>
    <subcellularLocation>
        <location evidence="2">Virion membrane</location>
        <topology evidence="2">Lipid-anchor</topology>
    </subcellularLocation>
    <subcellularLocation>
        <location evidence="2 5">Host cell membrane</location>
        <topology evidence="2">Lipid-anchor</topology>
        <orientation evidence="2 5">Cytoplasmic side</orientation>
    </subcellularLocation>
    <subcellularLocation>
        <location evidence="2 4 5">Host Golgi apparatus membrane</location>
        <topology evidence="2">Lipid-anchor</topology>
        <orientation evidence="2 5">Cytoplasmic side</orientation>
    </subcellularLocation>
    <text evidence="2">Virion membrane-associated tegument protein. Associates with host membrane lipids rafts. During virion morphogenesis, this protein probably accumulates in the endosomes and trans-Golgi where secondary envelopment occurs. It is probably transported to the cell surface from where it is endocytosed and directed to the trans-Golgi network (TGN).</text>
</comment>
<comment type="domain">
    <text evidence="8">The acidic region is required for efficient packaging. It is also involved in recycling the protein from the plasma membrane to the Golgi apparatus, and in the interaction with the capsid-binding protein UL16.</text>
</comment>
<comment type="PTM">
    <text evidence="2 5 8">Myristoylation and palmitoylation (probably on one or more of the nearby cysteines at the N-terminus) enable membrane-binding and Golgi apparatus-specific targeting and are essential for efficient packaging.</text>
</comment>
<comment type="PTM">
    <text evidence="2 8">Phosphorylated. Phosphorylation does not seem to be required for recycling to the host Golgi apparatus. Packaging is selective for underphosphorylated forms.</text>
</comment>
<comment type="similarity">
    <text evidence="2">Belongs to the herpesviridae cytoplasmic envelopment protein 3 family.</text>
</comment>
<feature type="initiator methionine" description="Removed; by host" evidence="2">
    <location>
        <position position="1"/>
    </location>
</feature>
<feature type="chain" id="PRO_0000115925" description="Cytoplasmic envelopment protein 3" evidence="2">
    <location>
        <begin position="2"/>
        <end position="96"/>
    </location>
</feature>
<feature type="region of interest" description="Asp/Glu-rich (acidic)" evidence="2">
    <location>
        <begin position="37"/>
        <end position="43"/>
    </location>
</feature>
<feature type="region of interest" description="Disordered" evidence="3">
    <location>
        <begin position="44"/>
        <end position="96"/>
    </location>
</feature>
<feature type="short sequence motif" description="Di-leucine-like internalization motif" evidence="2">
    <location>
        <begin position="18"/>
        <end position="19"/>
    </location>
</feature>
<feature type="compositionally biased region" description="Pro residues" evidence="3">
    <location>
        <begin position="87"/>
        <end position="96"/>
    </location>
</feature>
<feature type="modified residue" description="Phosphoserine" evidence="2 5">
    <location>
        <position position="40"/>
    </location>
</feature>
<feature type="lipid moiety-binding region" description="N-myristoyl glycine; by host" evidence="2 6">
    <location>
        <position position="2"/>
    </location>
</feature>
<feature type="sequence variant" description="In strain: 17 syn+.">
    <original>E</original>
    <variation>K</variation>
    <location>
        <position position="39"/>
    </location>
</feature>
<feature type="sequence variant" description="In strain: Nonneuroinvasive mutant HF10.">
    <original>G</original>
    <variation>V</variation>
    <location>
        <position position="54"/>
    </location>
</feature>
<feature type="sequence variant" description="In strain: Nonneuroinvasive mutant HF10.">
    <original>R</original>
    <variation>C</variation>
    <location>
        <position position="65"/>
    </location>
</feature>
<proteinExistence type="evidence at protein level"/>